<sequence length="419" mass="46772">MSSREYDDLSHAFAGAGGGLLSMTLTYPLVTLTTHAQTMVRLKKNEEEEKENSNEDGSLSPKSSNTSNISQKKISQFEILKKILKDQGAKGLYNGLESALFGIAVTNFVYYYFYELTGKTLSRRSNPQTTSGSKKVTLKKGLSVWQSMAAGAVAGTISRVATNPIWVANTRMTILSKNQGKLGKLNTIEAIIYILKNEGWQKLFTGIVPALFLVLNPIIQYTIFEQLKSFIVKIKKRNVTPVDALLLGAFGKLIATIITYPYITLRSRMHVKSMTENNEDSEKERTDSVQSLPEDGSDEDNSKENPYAETINKIISKLPSPIVSMFIIGYKMYKEEGVSSFYRGLSVKLLQSILNAAFLFYFKEELLILSDAIIKSTKRVTGLANNPYNAKDVIHSFEKALCMRNPRSRTTTVPQTNEE</sequence>
<dbReference type="EMBL" id="L27998">
    <property type="protein sequence ID" value="AAA66348.1"/>
    <property type="molecule type" value="Genomic_DNA"/>
</dbReference>
<dbReference type="PIR" id="S50283">
    <property type="entry name" value="S50283"/>
</dbReference>
<dbReference type="SMR" id="Q00319"/>
<dbReference type="TCDB" id="2.A.29.6.1">
    <property type="family name" value="the mitochondrial carrier (mc) family"/>
</dbReference>
<dbReference type="GO" id="GO:0005778">
    <property type="term" value="C:peroxisomal membrane"/>
    <property type="evidence" value="ECO:0007669"/>
    <property type="project" value="UniProtKB-SubCell"/>
</dbReference>
<dbReference type="GO" id="GO:0015217">
    <property type="term" value="F:ADP transmembrane transporter activity"/>
    <property type="evidence" value="ECO:0007669"/>
    <property type="project" value="TreeGrafter"/>
</dbReference>
<dbReference type="GO" id="GO:0080122">
    <property type="term" value="F:AMP transmembrane transporter activity"/>
    <property type="evidence" value="ECO:0007669"/>
    <property type="project" value="TreeGrafter"/>
</dbReference>
<dbReference type="GO" id="GO:0005347">
    <property type="term" value="F:ATP transmembrane transporter activity"/>
    <property type="evidence" value="ECO:0007669"/>
    <property type="project" value="TreeGrafter"/>
</dbReference>
<dbReference type="GO" id="GO:0015228">
    <property type="term" value="F:coenzyme A transmembrane transporter activity"/>
    <property type="evidence" value="ECO:0007669"/>
    <property type="project" value="TreeGrafter"/>
</dbReference>
<dbReference type="GO" id="GO:0015230">
    <property type="term" value="F:FAD transmembrane transporter activity"/>
    <property type="evidence" value="ECO:0007669"/>
    <property type="project" value="TreeGrafter"/>
</dbReference>
<dbReference type="GO" id="GO:0044610">
    <property type="term" value="F:FMN transmembrane transporter activity"/>
    <property type="evidence" value="ECO:0007669"/>
    <property type="project" value="TreeGrafter"/>
</dbReference>
<dbReference type="GO" id="GO:0051724">
    <property type="term" value="F:NAD transmembrane transporter activity"/>
    <property type="evidence" value="ECO:0007669"/>
    <property type="project" value="TreeGrafter"/>
</dbReference>
<dbReference type="Gene3D" id="1.50.40.10">
    <property type="entry name" value="Mitochondrial carrier domain"/>
    <property type="match status" value="1"/>
</dbReference>
<dbReference type="InterPro" id="IPR052217">
    <property type="entry name" value="Mito/Peroxisomal_Carrier"/>
</dbReference>
<dbReference type="InterPro" id="IPR018108">
    <property type="entry name" value="Mitochondrial_sb/sol_carrier"/>
</dbReference>
<dbReference type="InterPro" id="IPR023395">
    <property type="entry name" value="Mt_carrier_dom_sf"/>
</dbReference>
<dbReference type="PANTHER" id="PTHR45939:SF5">
    <property type="entry name" value="PEROXISOMAL MEMBRANE PROTEIN PMP34"/>
    <property type="match status" value="1"/>
</dbReference>
<dbReference type="PANTHER" id="PTHR45939">
    <property type="entry name" value="PEROXISOMAL MEMBRANE PROTEIN PMP34-RELATED"/>
    <property type="match status" value="1"/>
</dbReference>
<dbReference type="Pfam" id="PF00153">
    <property type="entry name" value="Mito_carr"/>
    <property type="match status" value="3"/>
</dbReference>
<dbReference type="SUPFAM" id="SSF103506">
    <property type="entry name" value="Mitochondrial carrier"/>
    <property type="match status" value="1"/>
</dbReference>
<dbReference type="PROSITE" id="PS50920">
    <property type="entry name" value="SOLCAR"/>
    <property type="match status" value="3"/>
</dbReference>
<gene>
    <name type="primary">PMP47B</name>
</gene>
<organism>
    <name type="scientific">Candida boidinii</name>
    <name type="common">Yeast</name>
    <dbReference type="NCBI Taxonomy" id="5477"/>
    <lineage>
        <taxon>Eukaryota</taxon>
        <taxon>Fungi</taxon>
        <taxon>Dikarya</taxon>
        <taxon>Ascomycota</taxon>
        <taxon>Saccharomycotina</taxon>
        <taxon>Pichiomycetes</taxon>
        <taxon>Pichiales</taxon>
        <taxon>Pichiaceae</taxon>
        <taxon>Ogataea</taxon>
        <taxon>Ogataea/Candida clade</taxon>
    </lineage>
</organism>
<proteinExistence type="evidence at transcript level"/>
<keyword id="KW-0472">Membrane</keyword>
<keyword id="KW-0576">Peroxisome</keyword>
<keyword id="KW-0677">Repeat</keyword>
<keyword id="KW-0812">Transmembrane</keyword>
<keyword id="KW-1133">Transmembrane helix</keyword>
<keyword id="KW-0813">Transport</keyword>
<protein>
    <recommendedName>
        <fullName>Peroxisomal membrane protein PMP47B</fullName>
    </recommendedName>
</protein>
<name>PM47B_CANBO</name>
<comment type="function">
    <text>May have transport activity.</text>
</comment>
<comment type="subcellular location">
    <subcellularLocation>
        <location>Peroxisome membrane</location>
        <topology>Multi-pass membrane protein</topology>
    </subcellularLocation>
</comment>
<comment type="induction">
    <text>By oleic acid, methanol or D-alanine.</text>
</comment>
<comment type="domain">
    <text>Lacks a typical peroxisomal sorting signal.</text>
</comment>
<comment type="similarity">
    <text evidence="3">Belongs to the mitochondrial carrier (TC 2.A.29) family.</text>
</comment>
<reference key="1">
    <citation type="journal article" date="1994" name="Yeast">
        <title>The peroxisomal membrane proteins of Candida boidinii: gene isolation and expression.</title>
        <authorList>
            <person name="Moreno M."/>
            <person name="Lark R."/>
            <person name="Campbell K.L."/>
            <person name="Goodman J.M."/>
        </authorList>
    </citation>
    <scope>NUCLEOTIDE SEQUENCE [GENOMIC DNA]</scope>
    <source>
        <strain>ATCC 32195</strain>
    </source>
</reference>
<accession>Q00319</accession>
<feature type="chain" id="PRO_0000090708" description="Peroxisomal membrane protein PMP47B">
    <location>
        <begin position="1"/>
        <end position="419"/>
    </location>
</feature>
<feature type="transmembrane region" description="Helical; Name=1" evidence="1">
    <location>
        <begin position="12"/>
        <end position="32"/>
    </location>
</feature>
<feature type="transmembrane region" description="Helical; Name=2" evidence="1">
    <location>
        <begin position="98"/>
        <end position="118"/>
    </location>
</feature>
<feature type="transmembrane region" description="Helical; Name=3" evidence="1">
    <location>
        <begin position="204"/>
        <end position="224"/>
    </location>
</feature>
<feature type="transmembrane region" description="Helical; Name=4" evidence="1">
    <location>
        <begin position="245"/>
        <end position="265"/>
    </location>
</feature>
<feature type="transmembrane region" description="Helical; Name=5" evidence="1">
    <location>
        <begin position="310"/>
        <end position="330"/>
    </location>
</feature>
<feature type="transmembrane region" description="Helical; Name=6" evidence="1">
    <location>
        <begin position="349"/>
        <end position="369"/>
    </location>
</feature>
<feature type="repeat" description="Solcar 1">
    <location>
        <begin position="6"/>
        <end position="120"/>
    </location>
</feature>
<feature type="repeat" description="Solcar 2">
    <location>
        <begin position="142"/>
        <end position="230"/>
    </location>
</feature>
<feature type="repeat" description="Solcar 3">
    <location>
        <begin position="239"/>
        <end position="369"/>
    </location>
</feature>
<feature type="region of interest" description="Disordered" evidence="2">
    <location>
        <begin position="44"/>
        <end position="69"/>
    </location>
</feature>
<feature type="region of interest" description="Disordered" evidence="2">
    <location>
        <begin position="274"/>
        <end position="305"/>
    </location>
</feature>
<feature type="compositionally biased region" description="Basic and acidic residues" evidence="2">
    <location>
        <begin position="44"/>
        <end position="53"/>
    </location>
</feature>
<feature type="compositionally biased region" description="Polar residues" evidence="2">
    <location>
        <begin position="56"/>
        <end position="69"/>
    </location>
</feature>
<evidence type="ECO:0000255" key="1"/>
<evidence type="ECO:0000256" key="2">
    <source>
        <dbReference type="SAM" id="MobiDB-lite"/>
    </source>
</evidence>
<evidence type="ECO:0000305" key="3"/>